<comment type="function">
    <text evidence="1">Produces ATP from ADP in the presence of a proton gradient across the membrane. The catalytic sites are hosted primarily by the beta subunits.</text>
</comment>
<comment type="catalytic activity">
    <reaction evidence="1">
        <text>ATP + H2O + 4 H(+)(in) = ADP + phosphate + 5 H(+)(out)</text>
        <dbReference type="Rhea" id="RHEA:57720"/>
        <dbReference type="ChEBI" id="CHEBI:15377"/>
        <dbReference type="ChEBI" id="CHEBI:15378"/>
        <dbReference type="ChEBI" id="CHEBI:30616"/>
        <dbReference type="ChEBI" id="CHEBI:43474"/>
        <dbReference type="ChEBI" id="CHEBI:456216"/>
        <dbReference type="EC" id="7.1.2.2"/>
    </reaction>
</comment>
<comment type="subunit">
    <text evidence="1">F-type ATPases have 2 components, CF(1) - the catalytic core - and CF(0) - the membrane proton channel. CF(1) has five subunits: alpha(3), beta(3), gamma(1), delta(1), epsilon(1). CF(0) has three main subunits: a(1), b(2) and c(9-12). The alpha and beta chains form an alternating ring which encloses part of the gamma chain. CF(1) is attached to CF(0) by a central stalk formed by the gamma and epsilon chains, while a peripheral stalk is formed by the delta and b chains.</text>
</comment>
<comment type="subcellular location">
    <subcellularLocation>
        <location evidence="1">Cell inner membrane</location>
        <topology evidence="1">Peripheral membrane protein</topology>
    </subcellularLocation>
</comment>
<comment type="similarity">
    <text evidence="1">Belongs to the ATPase alpha/beta chains family.</text>
</comment>
<evidence type="ECO:0000255" key="1">
    <source>
        <dbReference type="HAMAP-Rule" id="MF_01347"/>
    </source>
</evidence>
<accession>Q68VU8</accession>
<organism>
    <name type="scientific">Rickettsia typhi (strain ATCC VR-144 / Wilmington)</name>
    <dbReference type="NCBI Taxonomy" id="257363"/>
    <lineage>
        <taxon>Bacteria</taxon>
        <taxon>Pseudomonadati</taxon>
        <taxon>Pseudomonadota</taxon>
        <taxon>Alphaproteobacteria</taxon>
        <taxon>Rickettsiales</taxon>
        <taxon>Rickettsiaceae</taxon>
        <taxon>Rickettsieae</taxon>
        <taxon>Rickettsia</taxon>
        <taxon>typhus group</taxon>
    </lineage>
</organism>
<protein>
    <recommendedName>
        <fullName evidence="1">ATP synthase subunit beta</fullName>
        <ecNumber evidence="1">7.1.2.2</ecNumber>
    </recommendedName>
    <alternativeName>
        <fullName evidence="1">ATP synthase F1 sector subunit beta</fullName>
    </alternativeName>
    <alternativeName>
        <fullName evidence="1">F-ATPase subunit beta</fullName>
    </alternativeName>
</protein>
<gene>
    <name evidence="1" type="primary">atpD</name>
    <name type="ordered locus">RT0788</name>
</gene>
<sequence length="474" mass="51093">MTQNIGKITQVISAVVDVKFTNNSKLPEILNALECYNAKQRIVLEVAQHIGDDTVRCISMGSTEGLIRGLEVIDTGNPIHIPVGIATLGRIMNVVGEPIDGKGEIKSSTISSIYKPAPDFINQSTERDILVTGIKVVDLLAPYTKGGKIGLFGGAGVGKTVLIMELINNVAKAHGGYTVFAGVGERTREGNDLYHEMIASGVINLEAPEKSKVALVYGQMNEPPGARARVALSGLTIAESFRDMNAGQDVLFFVDNIFRFTQAGAEVSALLGRIPSAVGYQPTLATDMGELQERITSTKHGSITSVQAIYVPADDLTDPAPSTSFAHLDATTVLSRQIAELGIYPAVDPLDSNSQVLDPMIVGEEHYSVARQVQQVLQTYKSLQDIIAILGMDELSEEDKLTVSRARKIQRFLSQPFHVAEVFTGVEGKFVNLDDTIAGFKGLVEGKYDDLPEAAFYMVGTIDEAVEKAKILKI</sequence>
<proteinExistence type="inferred from homology"/>
<reference key="1">
    <citation type="journal article" date="2004" name="J. Bacteriol.">
        <title>Complete genome sequence of Rickettsia typhi and comparison with sequences of other Rickettsiae.</title>
        <authorList>
            <person name="McLeod M.P."/>
            <person name="Qin X."/>
            <person name="Karpathy S.E."/>
            <person name="Gioia J."/>
            <person name="Highlander S.K."/>
            <person name="Fox G.E."/>
            <person name="McNeill T.Z."/>
            <person name="Jiang H."/>
            <person name="Muzny D."/>
            <person name="Jacob L.S."/>
            <person name="Hawes A.C."/>
            <person name="Sodergren E."/>
            <person name="Gill R."/>
            <person name="Hume J."/>
            <person name="Morgan M."/>
            <person name="Fan G."/>
            <person name="Amin A.G."/>
            <person name="Gibbs R.A."/>
            <person name="Hong C."/>
            <person name="Yu X.-J."/>
            <person name="Walker D.H."/>
            <person name="Weinstock G.M."/>
        </authorList>
    </citation>
    <scope>NUCLEOTIDE SEQUENCE [LARGE SCALE GENOMIC DNA]</scope>
    <source>
        <strain>ATCC VR-144 / Wilmington</strain>
    </source>
</reference>
<name>ATPB_RICTY</name>
<feature type="chain" id="PRO_0000254364" description="ATP synthase subunit beta">
    <location>
        <begin position="1"/>
        <end position="474"/>
    </location>
</feature>
<feature type="binding site" evidence="1">
    <location>
        <begin position="153"/>
        <end position="160"/>
    </location>
    <ligand>
        <name>ATP</name>
        <dbReference type="ChEBI" id="CHEBI:30616"/>
    </ligand>
</feature>
<dbReference type="EC" id="7.1.2.2" evidence="1"/>
<dbReference type="EMBL" id="AE017197">
    <property type="protein sequence ID" value="AAU04244.1"/>
    <property type="molecule type" value="Genomic_DNA"/>
</dbReference>
<dbReference type="RefSeq" id="WP_011191219.1">
    <property type="nucleotide sequence ID" value="NC_006142.1"/>
</dbReference>
<dbReference type="SMR" id="Q68VU8"/>
<dbReference type="KEGG" id="rty:RT0788"/>
<dbReference type="eggNOG" id="COG0055">
    <property type="taxonomic scope" value="Bacteria"/>
</dbReference>
<dbReference type="HOGENOM" id="CLU_022398_0_2_5"/>
<dbReference type="OrthoDB" id="9801639at2"/>
<dbReference type="Proteomes" id="UP000000604">
    <property type="component" value="Chromosome"/>
</dbReference>
<dbReference type="GO" id="GO:0005886">
    <property type="term" value="C:plasma membrane"/>
    <property type="evidence" value="ECO:0007669"/>
    <property type="project" value="UniProtKB-SubCell"/>
</dbReference>
<dbReference type="GO" id="GO:0045259">
    <property type="term" value="C:proton-transporting ATP synthase complex"/>
    <property type="evidence" value="ECO:0007669"/>
    <property type="project" value="UniProtKB-KW"/>
</dbReference>
<dbReference type="GO" id="GO:0005524">
    <property type="term" value="F:ATP binding"/>
    <property type="evidence" value="ECO:0007669"/>
    <property type="project" value="UniProtKB-UniRule"/>
</dbReference>
<dbReference type="GO" id="GO:0016887">
    <property type="term" value="F:ATP hydrolysis activity"/>
    <property type="evidence" value="ECO:0007669"/>
    <property type="project" value="InterPro"/>
</dbReference>
<dbReference type="GO" id="GO:0046933">
    <property type="term" value="F:proton-transporting ATP synthase activity, rotational mechanism"/>
    <property type="evidence" value="ECO:0007669"/>
    <property type="project" value="UniProtKB-UniRule"/>
</dbReference>
<dbReference type="CDD" id="cd18110">
    <property type="entry name" value="ATP-synt_F1_beta_C"/>
    <property type="match status" value="1"/>
</dbReference>
<dbReference type="CDD" id="cd18115">
    <property type="entry name" value="ATP-synt_F1_beta_N"/>
    <property type="match status" value="1"/>
</dbReference>
<dbReference type="CDD" id="cd01133">
    <property type="entry name" value="F1-ATPase_beta_CD"/>
    <property type="match status" value="1"/>
</dbReference>
<dbReference type="FunFam" id="1.10.1140.10:FF:000001">
    <property type="entry name" value="ATP synthase subunit beta"/>
    <property type="match status" value="1"/>
</dbReference>
<dbReference type="FunFam" id="2.40.10.170:FF:000014">
    <property type="entry name" value="ATP synthase subunit beta"/>
    <property type="match status" value="1"/>
</dbReference>
<dbReference type="FunFam" id="3.40.50.300:FF:000026">
    <property type="entry name" value="ATP synthase subunit beta"/>
    <property type="match status" value="1"/>
</dbReference>
<dbReference type="Gene3D" id="2.40.10.170">
    <property type="match status" value="1"/>
</dbReference>
<dbReference type="Gene3D" id="1.10.1140.10">
    <property type="entry name" value="Bovine Mitochondrial F1-atpase, Atp Synthase Beta Chain, Chain D, domain 3"/>
    <property type="match status" value="1"/>
</dbReference>
<dbReference type="Gene3D" id="3.40.50.300">
    <property type="entry name" value="P-loop containing nucleotide triphosphate hydrolases"/>
    <property type="match status" value="1"/>
</dbReference>
<dbReference type="HAMAP" id="MF_01347">
    <property type="entry name" value="ATP_synth_beta_bact"/>
    <property type="match status" value="1"/>
</dbReference>
<dbReference type="InterPro" id="IPR003593">
    <property type="entry name" value="AAA+_ATPase"/>
</dbReference>
<dbReference type="InterPro" id="IPR055190">
    <property type="entry name" value="ATP-synt_VA_C"/>
</dbReference>
<dbReference type="InterPro" id="IPR005722">
    <property type="entry name" value="ATP_synth_F1_bsu"/>
</dbReference>
<dbReference type="InterPro" id="IPR020003">
    <property type="entry name" value="ATPase_a/bsu_AS"/>
</dbReference>
<dbReference type="InterPro" id="IPR050053">
    <property type="entry name" value="ATPase_alpha/beta_chains"/>
</dbReference>
<dbReference type="InterPro" id="IPR004100">
    <property type="entry name" value="ATPase_F1/V1/A1_a/bsu_N"/>
</dbReference>
<dbReference type="InterPro" id="IPR036121">
    <property type="entry name" value="ATPase_F1/V1/A1_a/bsu_N_sf"/>
</dbReference>
<dbReference type="InterPro" id="IPR000194">
    <property type="entry name" value="ATPase_F1/V1/A1_a/bsu_nucl-bd"/>
</dbReference>
<dbReference type="InterPro" id="IPR024034">
    <property type="entry name" value="ATPase_F1/V1_b/a_C"/>
</dbReference>
<dbReference type="InterPro" id="IPR027417">
    <property type="entry name" value="P-loop_NTPase"/>
</dbReference>
<dbReference type="NCBIfam" id="TIGR01039">
    <property type="entry name" value="atpD"/>
    <property type="match status" value="1"/>
</dbReference>
<dbReference type="PANTHER" id="PTHR15184">
    <property type="entry name" value="ATP SYNTHASE"/>
    <property type="match status" value="1"/>
</dbReference>
<dbReference type="PANTHER" id="PTHR15184:SF71">
    <property type="entry name" value="ATP SYNTHASE SUBUNIT BETA, MITOCHONDRIAL"/>
    <property type="match status" value="1"/>
</dbReference>
<dbReference type="Pfam" id="PF00006">
    <property type="entry name" value="ATP-synt_ab"/>
    <property type="match status" value="1"/>
</dbReference>
<dbReference type="Pfam" id="PF02874">
    <property type="entry name" value="ATP-synt_ab_N"/>
    <property type="match status" value="1"/>
</dbReference>
<dbReference type="Pfam" id="PF22919">
    <property type="entry name" value="ATP-synt_VA_C"/>
    <property type="match status" value="1"/>
</dbReference>
<dbReference type="PIRSF" id="PIRSF039072">
    <property type="entry name" value="ATPase_subunit_beta"/>
    <property type="match status" value="1"/>
</dbReference>
<dbReference type="SMART" id="SM00382">
    <property type="entry name" value="AAA"/>
    <property type="match status" value="1"/>
</dbReference>
<dbReference type="SUPFAM" id="SSF47917">
    <property type="entry name" value="C-terminal domain of alpha and beta subunits of F1 ATP synthase"/>
    <property type="match status" value="1"/>
</dbReference>
<dbReference type="SUPFAM" id="SSF50615">
    <property type="entry name" value="N-terminal domain of alpha and beta subunits of F1 ATP synthase"/>
    <property type="match status" value="1"/>
</dbReference>
<dbReference type="SUPFAM" id="SSF52540">
    <property type="entry name" value="P-loop containing nucleoside triphosphate hydrolases"/>
    <property type="match status" value="1"/>
</dbReference>
<dbReference type="PROSITE" id="PS00152">
    <property type="entry name" value="ATPASE_ALPHA_BETA"/>
    <property type="match status" value="1"/>
</dbReference>
<keyword id="KW-0066">ATP synthesis</keyword>
<keyword id="KW-0067">ATP-binding</keyword>
<keyword id="KW-0997">Cell inner membrane</keyword>
<keyword id="KW-1003">Cell membrane</keyword>
<keyword id="KW-0139">CF(1)</keyword>
<keyword id="KW-0375">Hydrogen ion transport</keyword>
<keyword id="KW-0406">Ion transport</keyword>
<keyword id="KW-0472">Membrane</keyword>
<keyword id="KW-0547">Nucleotide-binding</keyword>
<keyword id="KW-1278">Translocase</keyword>
<keyword id="KW-0813">Transport</keyword>